<gene>
    <name evidence="1" type="primary">rpsS</name>
    <name type="ordered locus">Tgr7_2320</name>
</gene>
<accession>B8GV54</accession>
<comment type="function">
    <text evidence="1">Protein S19 forms a complex with S13 that binds strongly to the 16S ribosomal RNA.</text>
</comment>
<comment type="similarity">
    <text evidence="1">Belongs to the universal ribosomal protein uS19 family.</text>
</comment>
<keyword id="KW-1185">Reference proteome</keyword>
<keyword id="KW-0687">Ribonucleoprotein</keyword>
<keyword id="KW-0689">Ribosomal protein</keyword>
<keyword id="KW-0694">RNA-binding</keyword>
<keyword id="KW-0699">rRNA-binding</keyword>
<reference key="1">
    <citation type="journal article" date="2011" name="Stand. Genomic Sci.">
        <title>Complete genome sequence of 'Thioalkalivibrio sulfidophilus' HL-EbGr7.</title>
        <authorList>
            <person name="Muyzer G."/>
            <person name="Sorokin D.Y."/>
            <person name="Mavromatis K."/>
            <person name="Lapidus A."/>
            <person name="Clum A."/>
            <person name="Ivanova N."/>
            <person name="Pati A."/>
            <person name="d'Haeseleer P."/>
            <person name="Woyke T."/>
            <person name="Kyrpides N.C."/>
        </authorList>
    </citation>
    <scope>NUCLEOTIDE SEQUENCE [LARGE SCALE GENOMIC DNA]</scope>
    <source>
        <strain>HL-EbGR7</strain>
    </source>
</reference>
<name>RS19_THISH</name>
<evidence type="ECO:0000255" key="1">
    <source>
        <dbReference type="HAMAP-Rule" id="MF_00531"/>
    </source>
</evidence>
<evidence type="ECO:0000305" key="2"/>
<feature type="chain" id="PRO_1000146422" description="Small ribosomal subunit protein uS19">
    <location>
        <begin position="1"/>
        <end position="90"/>
    </location>
</feature>
<protein>
    <recommendedName>
        <fullName evidence="1">Small ribosomal subunit protein uS19</fullName>
    </recommendedName>
    <alternativeName>
        <fullName evidence="2">30S ribosomal protein S19</fullName>
    </alternativeName>
</protein>
<organism>
    <name type="scientific">Thioalkalivibrio sulfidiphilus (strain HL-EbGR7)</name>
    <dbReference type="NCBI Taxonomy" id="396588"/>
    <lineage>
        <taxon>Bacteria</taxon>
        <taxon>Pseudomonadati</taxon>
        <taxon>Pseudomonadota</taxon>
        <taxon>Gammaproteobacteria</taxon>
        <taxon>Chromatiales</taxon>
        <taxon>Ectothiorhodospiraceae</taxon>
        <taxon>Thioalkalivibrio</taxon>
    </lineage>
</organism>
<sequence length="90" mass="10172">MPRSLKKGPFIDHHLLQKVDAAVANNERRPIKTWSRRSMIMPQMVGLTIAVHNGRQHVPVLVNENMVGHKLGEFAATRTFKGHVANKKAR</sequence>
<proteinExistence type="inferred from homology"/>
<dbReference type="EMBL" id="CP001339">
    <property type="protein sequence ID" value="ACL73400.1"/>
    <property type="molecule type" value="Genomic_DNA"/>
</dbReference>
<dbReference type="RefSeq" id="WP_012638876.1">
    <property type="nucleotide sequence ID" value="NC_011901.1"/>
</dbReference>
<dbReference type="SMR" id="B8GV54"/>
<dbReference type="STRING" id="396588.Tgr7_2320"/>
<dbReference type="KEGG" id="tgr:Tgr7_2320"/>
<dbReference type="eggNOG" id="COG0185">
    <property type="taxonomic scope" value="Bacteria"/>
</dbReference>
<dbReference type="HOGENOM" id="CLU_144911_0_1_6"/>
<dbReference type="OrthoDB" id="9797833at2"/>
<dbReference type="Proteomes" id="UP000002383">
    <property type="component" value="Chromosome"/>
</dbReference>
<dbReference type="GO" id="GO:0005737">
    <property type="term" value="C:cytoplasm"/>
    <property type="evidence" value="ECO:0007669"/>
    <property type="project" value="UniProtKB-ARBA"/>
</dbReference>
<dbReference type="GO" id="GO:0015935">
    <property type="term" value="C:small ribosomal subunit"/>
    <property type="evidence" value="ECO:0007669"/>
    <property type="project" value="InterPro"/>
</dbReference>
<dbReference type="GO" id="GO:0019843">
    <property type="term" value="F:rRNA binding"/>
    <property type="evidence" value="ECO:0007669"/>
    <property type="project" value="UniProtKB-UniRule"/>
</dbReference>
<dbReference type="GO" id="GO:0003735">
    <property type="term" value="F:structural constituent of ribosome"/>
    <property type="evidence" value="ECO:0007669"/>
    <property type="project" value="InterPro"/>
</dbReference>
<dbReference type="GO" id="GO:0000028">
    <property type="term" value="P:ribosomal small subunit assembly"/>
    <property type="evidence" value="ECO:0007669"/>
    <property type="project" value="TreeGrafter"/>
</dbReference>
<dbReference type="GO" id="GO:0006412">
    <property type="term" value="P:translation"/>
    <property type="evidence" value="ECO:0007669"/>
    <property type="project" value="UniProtKB-UniRule"/>
</dbReference>
<dbReference type="FunFam" id="3.30.860.10:FF:000001">
    <property type="entry name" value="30S ribosomal protein S19"/>
    <property type="match status" value="1"/>
</dbReference>
<dbReference type="Gene3D" id="3.30.860.10">
    <property type="entry name" value="30s Ribosomal Protein S19, Chain A"/>
    <property type="match status" value="1"/>
</dbReference>
<dbReference type="HAMAP" id="MF_00531">
    <property type="entry name" value="Ribosomal_uS19"/>
    <property type="match status" value="1"/>
</dbReference>
<dbReference type="InterPro" id="IPR002222">
    <property type="entry name" value="Ribosomal_uS19"/>
</dbReference>
<dbReference type="InterPro" id="IPR005732">
    <property type="entry name" value="Ribosomal_uS19_bac-type"/>
</dbReference>
<dbReference type="InterPro" id="IPR020934">
    <property type="entry name" value="Ribosomal_uS19_CS"/>
</dbReference>
<dbReference type="InterPro" id="IPR023575">
    <property type="entry name" value="Ribosomal_uS19_SF"/>
</dbReference>
<dbReference type="NCBIfam" id="TIGR01050">
    <property type="entry name" value="rpsS_bact"/>
    <property type="match status" value="1"/>
</dbReference>
<dbReference type="PANTHER" id="PTHR11880">
    <property type="entry name" value="RIBOSOMAL PROTEIN S19P FAMILY MEMBER"/>
    <property type="match status" value="1"/>
</dbReference>
<dbReference type="PANTHER" id="PTHR11880:SF8">
    <property type="entry name" value="SMALL RIBOSOMAL SUBUNIT PROTEIN US19M"/>
    <property type="match status" value="1"/>
</dbReference>
<dbReference type="Pfam" id="PF00203">
    <property type="entry name" value="Ribosomal_S19"/>
    <property type="match status" value="1"/>
</dbReference>
<dbReference type="PIRSF" id="PIRSF002144">
    <property type="entry name" value="Ribosomal_S19"/>
    <property type="match status" value="1"/>
</dbReference>
<dbReference type="PRINTS" id="PR00975">
    <property type="entry name" value="RIBOSOMALS19"/>
</dbReference>
<dbReference type="SUPFAM" id="SSF54570">
    <property type="entry name" value="Ribosomal protein S19"/>
    <property type="match status" value="1"/>
</dbReference>
<dbReference type="PROSITE" id="PS00323">
    <property type="entry name" value="RIBOSOMAL_S19"/>
    <property type="match status" value="1"/>
</dbReference>